<reference key="1">
    <citation type="journal article" date="2009" name="Nature">
        <title>Evolution of pathogenicity and sexual reproduction in eight Candida genomes.</title>
        <authorList>
            <person name="Butler G."/>
            <person name="Rasmussen M.D."/>
            <person name="Lin M.F."/>
            <person name="Santos M.A.S."/>
            <person name="Sakthikumar S."/>
            <person name="Munro C.A."/>
            <person name="Rheinbay E."/>
            <person name="Grabherr M."/>
            <person name="Forche A."/>
            <person name="Reedy J.L."/>
            <person name="Agrafioti I."/>
            <person name="Arnaud M.B."/>
            <person name="Bates S."/>
            <person name="Brown A.J.P."/>
            <person name="Brunke S."/>
            <person name="Costanzo M.C."/>
            <person name="Fitzpatrick D.A."/>
            <person name="de Groot P.W.J."/>
            <person name="Harris D."/>
            <person name="Hoyer L.L."/>
            <person name="Hube B."/>
            <person name="Klis F.M."/>
            <person name="Kodira C."/>
            <person name="Lennard N."/>
            <person name="Logue M.E."/>
            <person name="Martin R."/>
            <person name="Neiman A.M."/>
            <person name="Nikolaou E."/>
            <person name="Quail M.A."/>
            <person name="Quinn J."/>
            <person name="Santos M.C."/>
            <person name="Schmitzberger F.F."/>
            <person name="Sherlock G."/>
            <person name="Shah P."/>
            <person name="Silverstein K.A.T."/>
            <person name="Skrzypek M.S."/>
            <person name="Soll D."/>
            <person name="Staggs R."/>
            <person name="Stansfield I."/>
            <person name="Stumpf M.P.H."/>
            <person name="Sudbery P.E."/>
            <person name="Srikantha T."/>
            <person name="Zeng Q."/>
            <person name="Berman J."/>
            <person name="Berriman M."/>
            <person name="Heitman J."/>
            <person name="Gow N.A.R."/>
            <person name="Lorenz M.C."/>
            <person name="Birren B.W."/>
            <person name="Kellis M."/>
            <person name="Cuomo C.A."/>
        </authorList>
    </citation>
    <scope>NUCLEOTIDE SEQUENCE [LARGE SCALE GENOMIC DNA]</scope>
    <source>
        <strain>ATCC 11503 / BCRC 21390 / CBS 2605 / JCM 1781 / NBRC 1676 / NRRL YB-4239</strain>
    </source>
</reference>
<feature type="chain" id="PRO_0000357312" description="Very-long-chain 3-oxoacyl-CoA reductase">
    <location>
        <begin position="1"/>
        <end position="350"/>
    </location>
</feature>
<feature type="transmembrane region" description="Helical" evidence="4">
    <location>
        <begin position="20"/>
        <end position="40"/>
    </location>
</feature>
<feature type="active site" description="Proton donor" evidence="2">
    <location>
        <position position="221"/>
    </location>
</feature>
<feature type="active site" description="Lowers pKa of active site Tyr" evidence="2">
    <location>
        <position position="225"/>
    </location>
</feature>
<feature type="binding site" evidence="1">
    <location>
        <position position="66"/>
    </location>
    <ligand>
        <name>NADP(+)</name>
        <dbReference type="ChEBI" id="CHEBI:58349"/>
    </ligand>
</feature>
<feature type="binding site" evidence="1">
    <location>
        <position position="120"/>
    </location>
    <ligand>
        <name>NADP(+)</name>
        <dbReference type="ChEBI" id="CHEBI:58349"/>
    </ligand>
</feature>
<feature type="binding site" evidence="2">
    <location>
        <position position="147"/>
    </location>
    <ligand>
        <name>NADP(+)</name>
        <dbReference type="ChEBI" id="CHEBI:58349"/>
    </ligand>
</feature>
<feature type="binding site" evidence="2">
    <location>
        <position position="221"/>
    </location>
    <ligand>
        <name>NADP(+)</name>
        <dbReference type="ChEBI" id="CHEBI:58349"/>
    </ligand>
</feature>
<feature type="binding site" evidence="2">
    <location>
        <position position="225"/>
    </location>
    <ligand>
        <name>NADP(+)</name>
        <dbReference type="ChEBI" id="CHEBI:58349"/>
    </ligand>
</feature>
<feature type="binding site" evidence="2">
    <location>
        <position position="254"/>
    </location>
    <ligand>
        <name>NADP(+)</name>
        <dbReference type="ChEBI" id="CHEBI:58349"/>
    </ligand>
</feature>
<feature type="binding site" evidence="1">
    <location>
        <position position="256"/>
    </location>
    <ligand>
        <name>NADP(+)</name>
        <dbReference type="ChEBI" id="CHEBI:58349"/>
    </ligand>
</feature>
<sequence>MSQIDQLLLSIASNKLAYYALLFSLLFGVFKLTTFTLRFASLIVDLFILPAVDFSKYGANRGNWAVVTGASDGIGKEYALQLAKRGLSIVLVSRTQSKLELLATEISSKYKVNTKIVAFDASKDDEENYLELEKAIYDLPITVLINNVGQSHSIPVPFLETEQKELRDIITINNTATLRITQVVAPAIVATVEKSQKKVRGLILTMGSFGGLLPTPYLATYSGSKAFLQAWSAALAGELNPKGVDVELVISYLVTSAMSKIRRSSLTIPNPKQFVASTLASVGRRNGAQERFATNTPYWAHAIMHFAIENTVGVYSKIANTLNFNMHKSIRTRALKKQEKRSRLAAEKIE</sequence>
<proteinExistence type="inferred from homology"/>
<organism>
    <name type="scientific">Lodderomyces elongisporus (strain ATCC 11503 / CBS 2605 / JCM 1781 / NBRC 1676 / NRRL YB-4239)</name>
    <name type="common">Yeast</name>
    <name type="synonym">Saccharomyces elongisporus</name>
    <dbReference type="NCBI Taxonomy" id="379508"/>
    <lineage>
        <taxon>Eukaryota</taxon>
        <taxon>Fungi</taxon>
        <taxon>Dikarya</taxon>
        <taxon>Ascomycota</taxon>
        <taxon>Saccharomycotina</taxon>
        <taxon>Pichiomycetes</taxon>
        <taxon>Debaryomycetaceae</taxon>
        <taxon>Candida/Lodderomyces clade</taxon>
        <taxon>Lodderomyces</taxon>
    </lineage>
</organism>
<name>MKAR_LODEL</name>
<evidence type="ECO:0000250" key="1">
    <source>
        <dbReference type="UniProtKB" id="L0E2Z4"/>
    </source>
</evidence>
<evidence type="ECO:0000250" key="2">
    <source>
        <dbReference type="UniProtKB" id="O93868"/>
    </source>
</evidence>
<evidence type="ECO:0000250" key="3">
    <source>
        <dbReference type="UniProtKB" id="P38286"/>
    </source>
</evidence>
<evidence type="ECO:0000255" key="4">
    <source>
        <dbReference type="HAMAP-Rule" id="MF_03107"/>
    </source>
</evidence>
<dbReference type="EC" id="1.1.1.330" evidence="4"/>
<dbReference type="EMBL" id="CH981527">
    <property type="protein sequence ID" value="EDK45019.1"/>
    <property type="molecule type" value="Genomic_DNA"/>
</dbReference>
<dbReference type="RefSeq" id="XP_001525270.1">
    <property type="nucleotide sequence ID" value="XM_001525220.1"/>
</dbReference>
<dbReference type="SMR" id="A5E0R1"/>
<dbReference type="FunCoup" id="A5E0R1">
    <property type="interactions" value="694"/>
</dbReference>
<dbReference type="STRING" id="379508.A5E0R1"/>
<dbReference type="GeneID" id="5232340"/>
<dbReference type="KEGG" id="lel:PVL30_002692"/>
<dbReference type="VEuPathDB" id="FungiDB:LELG_03198"/>
<dbReference type="eggNOG" id="KOG1014">
    <property type="taxonomic scope" value="Eukaryota"/>
</dbReference>
<dbReference type="HOGENOM" id="CLU_010194_38_0_1"/>
<dbReference type="InParanoid" id="A5E0R1"/>
<dbReference type="OMA" id="LVAPGMM"/>
<dbReference type="OrthoDB" id="5545019at2759"/>
<dbReference type="UniPathway" id="UPA00094"/>
<dbReference type="Proteomes" id="UP000001996">
    <property type="component" value="Unassembled WGS sequence"/>
</dbReference>
<dbReference type="GO" id="GO:0005789">
    <property type="term" value="C:endoplasmic reticulum membrane"/>
    <property type="evidence" value="ECO:0007669"/>
    <property type="project" value="UniProtKB-SubCell"/>
</dbReference>
<dbReference type="GO" id="GO:0045703">
    <property type="term" value="F:ketoreductase activity"/>
    <property type="evidence" value="ECO:0007669"/>
    <property type="project" value="UniProtKB-UniRule"/>
</dbReference>
<dbReference type="GO" id="GO:0141040">
    <property type="term" value="F:very-long-chain 3-oxoacyl-CoA reductase activity"/>
    <property type="evidence" value="ECO:0007669"/>
    <property type="project" value="UniProtKB-EC"/>
</dbReference>
<dbReference type="GO" id="GO:0030497">
    <property type="term" value="P:fatty acid elongation"/>
    <property type="evidence" value="ECO:0007669"/>
    <property type="project" value="UniProtKB-UniRule"/>
</dbReference>
<dbReference type="GO" id="GO:0030148">
    <property type="term" value="P:sphingolipid biosynthetic process"/>
    <property type="evidence" value="ECO:0007669"/>
    <property type="project" value="EnsemblFungi"/>
</dbReference>
<dbReference type="GO" id="GO:0042761">
    <property type="term" value="P:very long-chain fatty acid biosynthetic process"/>
    <property type="evidence" value="ECO:0007669"/>
    <property type="project" value="EnsemblFungi"/>
</dbReference>
<dbReference type="CDD" id="cd05356">
    <property type="entry name" value="17beta-HSD1_like_SDR_c"/>
    <property type="match status" value="1"/>
</dbReference>
<dbReference type="FunFam" id="3.40.50.720:FF:000317">
    <property type="entry name" value="Very-long-chain 3-oxoacyl-CoA reductase"/>
    <property type="match status" value="1"/>
</dbReference>
<dbReference type="Gene3D" id="3.40.50.720">
    <property type="entry name" value="NAD(P)-binding Rossmann-like Domain"/>
    <property type="match status" value="1"/>
</dbReference>
<dbReference type="HAMAP" id="MF_03107">
    <property type="entry name" value="3_ketoreductase"/>
    <property type="match status" value="1"/>
</dbReference>
<dbReference type="InterPro" id="IPR027533">
    <property type="entry name" value="3_ketoreductase_fungal"/>
</dbReference>
<dbReference type="InterPro" id="IPR036291">
    <property type="entry name" value="NAD(P)-bd_dom_sf"/>
</dbReference>
<dbReference type="InterPro" id="IPR020904">
    <property type="entry name" value="Sc_DH/Rdtase_CS"/>
</dbReference>
<dbReference type="InterPro" id="IPR002347">
    <property type="entry name" value="SDR_fam"/>
</dbReference>
<dbReference type="PANTHER" id="PTHR43086:SF2">
    <property type="entry name" value="HYDROXYSTEROID DEHYDROGENASE-LIKE PROTEIN 1"/>
    <property type="match status" value="1"/>
</dbReference>
<dbReference type="PANTHER" id="PTHR43086">
    <property type="entry name" value="VERY-LONG-CHAIN 3-OXOOACYL-COA REDUCTASE"/>
    <property type="match status" value="1"/>
</dbReference>
<dbReference type="Pfam" id="PF00106">
    <property type="entry name" value="adh_short"/>
    <property type="match status" value="1"/>
</dbReference>
<dbReference type="PIRSF" id="PIRSF000126">
    <property type="entry name" value="11-beta-HSD1"/>
    <property type="match status" value="1"/>
</dbReference>
<dbReference type="PRINTS" id="PR00081">
    <property type="entry name" value="GDHRDH"/>
</dbReference>
<dbReference type="SUPFAM" id="SSF51735">
    <property type="entry name" value="NAD(P)-binding Rossmann-fold domains"/>
    <property type="match status" value="1"/>
</dbReference>
<dbReference type="PROSITE" id="PS00061">
    <property type="entry name" value="ADH_SHORT"/>
    <property type="match status" value="1"/>
</dbReference>
<gene>
    <name type="ORF">LELG_03198</name>
</gene>
<keyword id="KW-0256">Endoplasmic reticulum</keyword>
<keyword id="KW-0275">Fatty acid biosynthesis</keyword>
<keyword id="KW-0276">Fatty acid metabolism</keyword>
<keyword id="KW-0444">Lipid biosynthesis</keyword>
<keyword id="KW-0443">Lipid metabolism</keyword>
<keyword id="KW-0472">Membrane</keyword>
<keyword id="KW-0521">NADP</keyword>
<keyword id="KW-0560">Oxidoreductase</keyword>
<keyword id="KW-1185">Reference proteome</keyword>
<keyword id="KW-0812">Transmembrane</keyword>
<keyword id="KW-1133">Transmembrane helix</keyword>
<accession>A5E0R1</accession>
<comment type="function">
    <text evidence="4">Component of the microsomal membrane bound fatty acid elongation system, which produces the 26-carbon very long-chain fatty acids (VLCFA) from palmitate. Catalyzes the reduction of the 3-ketoacyl-CoA intermediate that is formed in each cycle of fatty acid elongation. VLCFAs serve as precursors for ceramide and sphingolipids.</text>
</comment>
<comment type="catalytic activity">
    <reaction evidence="4">
        <text>a very-long-chain (3R)-3-hydroxyacyl-CoA + NADP(+) = a very-long-chain 3-oxoacyl-CoA + NADPH + H(+)</text>
        <dbReference type="Rhea" id="RHEA:48680"/>
        <dbReference type="ChEBI" id="CHEBI:15378"/>
        <dbReference type="ChEBI" id="CHEBI:57783"/>
        <dbReference type="ChEBI" id="CHEBI:58349"/>
        <dbReference type="ChEBI" id="CHEBI:85440"/>
        <dbReference type="ChEBI" id="CHEBI:90725"/>
        <dbReference type="EC" id="1.1.1.330"/>
    </reaction>
</comment>
<comment type="pathway">
    <text evidence="3">Lipid metabolism; fatty acid biosynthesis.</text>
</comment>
<comment type="subcellular location">
    <subcellularLocation>
        <location evidence="4">Endoplasmic reticulum membrane</location>
        <topology evidence="4">Single-pass membrane protein</topology>
    </subcellularLocation>
</comment>
<comment type="similarity">
    <text evidence="4">Belongs to the short-chain dehydrogenases/reductases (SDR) family.</text>
</comment>
<protein>
    <recommendedName>
        <fullName evidence="4">Very-long-chain 3-oxoacyl-CoA reductase</fullName>
        <ecNumber evidence="4">1.1.1.330</ecNumber>
    </recommendedName>
    <alternativeName>
        <fullName evidence="4">3-ketoacyl-CoA reductase</fullName>
        <shortName evidence="4">3-ketoreductase</shortName>
        <shortName evidence="4">KAR</shortName>
    </alternativeName>
    <alternativeName>
        <fullName evidence="4">Microsomal beta-keto-reductase</fullName>
    </alternativeName>
</protein>